<keyword id="KW-0963">Cytoplasm</keyword>
<keyword id="KW-0229">DNA integration</keyword>
<keyword id="KW-0233">DNA recombination</keyword>
<keyword id="KW-0238">DNA-binding</keyword>
<keyword id="KW-1185">Reference proteome</keyword>
<protein>
    <recommendedName>
        <fullName evidence="2 7">Tyrosine recombinase XerA</fullName>
    </recommendedName>
</protein>
<organism>
    <name type="scientific">Saccharolobus solfataricus (strain ATCC 35092 / DSM 1617 / JCM 11322 / P2)</name>
    <name type="common">Sulfolobus solfataricus</name>
    <dbReference type="NCBI Taxonomy" id="273057"/>
    <lineage>
        <taxon>Archaea</taxon>
        <taxon>Thermoproteota</taxon>
        <taxon>Thermoprotei</taxon>
        <taxon>Sulfolobales</taxon>
        <taxon>Sulfolobaceae</taxon>
        <taxon>Saccharolobus</taxon>
    </lineage>
</organism>
<accession>Q980D9</accession>
<proteinExistence type="evidence at protein level"/>
<evidence type="ECO:0000250" key="1">
    <source>
        <dbReference type="UniProtKB" id="P0A8P8"/>
    </source>
</evidence>
<evidence type="ECO:0000255" key="2">
    <source>
        <dbReference type="HAMAP-Rule" id="MF_02055"/>
    </source>
</evidence>
<evidence type="ECO:0000255" key="3">
    <source>
        <dbReference type="PROSITE-ProRule" id="PRU01246"/>
    </source>
</evidence>
<evidence type="ECO:0000255" key="4">
    <source>
        <dbReference type="PROSITE-ProRule" id="PRU01248"/>
    </source>
</evidence>
<evidence type="ECO:0000269" key="5">
    <source>
    </source>
</evidence>
<evidence type="ECO:0000303" key="6">
    <source>
    </source>
</evidence>
<evidence type="ECO:0000305" key="7"/>
<evidence type="ECO:0000312" key="8">
    <source>
        <dbReference type="EMBL" id="AAK40704.1"/>
    </source>
</evidence>
<sequence>MKLDLGSPPESGDLYNAFINALIIAGAGNGTIKLYSTAVRDFLDFINKDPRKVTSEDLNRWISSLLNREGKVKGDEVEKKRAKSVTIRYYIIAVRRFLKWINVSVRPPIPKVRRKEVKALDEIQIQKVLNACKRTKDKLIIRLLLDTGLRANELLSVLVKDIDLENNMIRVRNTKNGEERIVFFTDETKLLLRKYIKGKKAEDKLFDLKYDTLYRKLKRLGKKVGIDLRPHILRHTFATLSLKRGINVITLQKLLGHKDIKTTQIYTHLVLDDLRNEYLKAMSSSSSKTPP</sequence>
<comment type="function">
    <text evidence="5">Site-specific tyrosine recombinase, which acts by catalyzing the cutting and rejoining of the recombining DNA molecules. Probably involved in the resolution of chromosome dimers. Binds to the dif site.</text>
</comment>
<comment type="subcellular location">
    <subcellularLocation>
        <location evidence="2">Cytoplasm</location>
    </subcellularLocation>
</comment>
<comment type="similarity">
    <text evidence="2">Belongs to the 'phage' integrase family. XerA subfamily.</text>
</comment>
<reference key="1">
    <citation type="journal article" date="2001" name="Proc. Natl. Acad. Sci. U.S.A.">
        <title>The complete genome of the crenarchaeon Sulfolobus solfataricus P2.</title>
        <authorList>
            <person name="She Q."/>
            <person name="Singh R.K."/>
            <person name="Confalonieri F."/>
            <person name="Zivanovic Y."/>
            <person name="Allard G."/>
            <person name="Awayez M.J."/>
            <person name="Chan-Weiher C.C.-Y."/>
            <person name="Clausen I.G."/>
            <person name="Curtis B.A."/>
            <person name="De Moors A."/>
            <person name="Erauso G."/>
            <person name="Fletcher C."/>
            <person name="Gordon P.M.K."/>
            <person name="Heikamp-de Jong I."/>
            <person name="Jeffries A.C."/>
            <person name="Kozera C.J."/>
            <person name="Medina N."/>
            <person name="Peng X."/>
            <person name="Thi-Ngoc H.P."/>
            <person name="Redder P."/>
            <person name="Schenk M.E."/>
            <person name="Theriault C."/>
            <person name="Tolstrup N."/>
            <person name="Charlebois R.L."/>
            <person name="Doolittle W.F."/>
            <person name="Duguet M."/>
            <person name="Gaasterland T."/>
            <person name="Garrett R.A."/>
            <person name="Ragan M.A."/>
            <person name="Sensen C.W."/>
            <person name="Van der Oost J."/>
        </authorList>
    </citation>
    <scope>NUCLEOTIDE SEQUENCE [LARGE SCALE GENOMIC DNA]</scope>
    <source>
        <strain>ATCC 35092 / DSM 1617 / JCM 11322 / P2</strain>
    </source>
</reference>
<reference key="2">
    <citation type="journal article" date="2011" name="EMBO J.">
        <title>Replication termination and chromosome dimer resolution in the archaeon Sulfolobus solfataricus.</title>
        <authorList>
            <person name="Duggin I.G."/>
            <person name="Dubarry N."/>
            <person name="Bell S.D."/>
        </authorList>
    </citation>
    <scope>FUNCTION</scope>
    <scope>DNA-BINDING</scope>
    <source>
        <strain>ATCC 35092 / DSM 1617 / JCM 11322 / P2</strain>
    </source>
</reference>
<name>XERA_SACS2</name>
<feature type="chain" id="PRO_0000435796" description="Tyrosine recombinase XerA">
    <location>
        <begin position="1"/>
        <end position="291"/>
    </location>
</feature>
<feature type="domain" description="Core-binding (CB)" evidence="4">
    <location>
        <begin position="9"/>
        <end position="102"/>
    </location>
</feature>
<feature type="domain" description="Tyr recombinase" evidence="3">
    <location>
        <begin position="115"/>
        <end position="279"/>
    </location>
</feature>
<feature type="active site" evidence="1 2">
    <location>
        <position position="150"/>
    </location>
</feature>
<feature type="active site" evidence="1 2">
    <location>
        <position position="175"/>
    </location>
</feature>
<feature type="active site" evidence="1 2">
    <location>
        <position position="231"/>
    </location>
</feature>
<feature type="active site" evidence="1 2">
    <location>
        <position position="234"/>
    </location>
</feature>
<feature type="active site" evidence="1 2">
    <location>
        <position position="257"/>
    </location>
</feature>
<feature type="active site" description="O-(3'-phospho-DNA)-tyrosine intermediate" evidence="1 2">
    <location>
        <position position="266"/>
    </location>
</feature>
<dbReference type="EMBL" id="AE006641">
    <property type="protein sequence ID" value="AAK40704.1"/>
    <property type="molecule type" value="Genomic_DNA"/>
</dbReference>
<dbReference type="PIR" id="A99181">
    <property type="entry name" value="A99181"/>
</dbReference>
<dbReference type="RefSeq" id="WP_009990677.1">
    <property type="nucleotide sequence ID" value="NC_002754.1"/>
</dbReference>
<dbReference type="SMR" id="Q980D9"/>
<dbReference type="FunCoup" id="Q980D9">
    <property type="interactions" value="3"/>
</dbReference>
<dbReference type="STRING" id="273057.SSO0375"/>
<dbReference type="PaxDb" id="273057-SSO0375"/>
<dbReference type="EnsemblBacteria" id="AAK40704">
    <property type="protein sequence ID" value="AAK40704"/>
    <property type="gene ID" value="SSO0375"/>
</dbReference>
<dbReference type="GeneID" id="44129348"/>
<dbReference type="KEGG" id="sso:SSO0375"/>
<dbReference type="PATRIC" id="fig|273057.12.peg.368"/>
<dbReference type="eggNOG" id="arCOG01241">
    <property type="taxonomic scope" value="Archaea"/>
</dbReference>
<dbReference type="HOGENOM" id="CLU_027562_9_2_2"/>
<dbReference type="InParanoid" id="Q980D9"/>
<dbReference type="PhylomeDB" id="Q980D9"/>
<dbReference type="Proteomes" id="UP000001974">
    <property type="component" value="Chromosome"/>
</dbReference>
<dbReference type="GO" id="GO:0005737">
    <property type="term" value="C:cytoplasm"/>
    <property type="evidence" value="ECO:0007669"/>
    <property type="project" value="UniProtKB-SubCell"/>
</dbReference>
<dbReference type="GO" id="GO:0003677">
    <property type="term" value="F:DNA binding"/>
    <property type="evidence" value="ECO:0007669"/>
    <property type="project" value="UniProtKB-KW"/>
</dbReference>
<dbReference type="GO" id="GO:0009009">
    <property type="term" value="F:site-specific recombinase activity"/>
    <property type="evidence" value="ECO:0000318"/>
    <property type="project" value="GO_Central"/>
</dbReference>
<dbReference type="GO" id="GO:0009037">
    <property type="term" value="F:tyrosine-based site-specific recombinase activity"/>
    <property type="evidence" value="ECO:0007669"/>
    <property type="project" value="UniProtKB-UniRule"/>
</dbReference>
<dbReference type="GO" id="GO:0007059">
    <property type="term" value="P:chromosome segregation"/>
    <property type="evidence" value="ECO:0000318"/>
    <property type="project" value="GO_Central"/>
</dbReference>
<dbReference type="GO" id="GO:0006310">
    <property type="term" value="P:DNA recombination"/>
    <property type="evidence" value="ECO:0000318"/>
    <property type="project" value="GO_Central"/>
</dbReference>
<dbReference type="GO" id="GO:0006313">
    <property type="term" value="P:DNA transposition"/>
    <property type="evidence" value="ECO:0007669"/>
    <property type="project" value="UniProtKB-UniRule"/>
</dbReference>
<dbReference type="CDD" id="cd00796">
    <property type="entry name" value="INT_Rci_Hp1_C"/>
    <property type="match status" value="1"/>
</dbReference>
<dbReference type="Gene3D" id="1.10.150.130">
    <property type="match status" value="1"/>
</dbReference>
<dbReference type="Gene3D" id="1.10.443.10">
    <property type="entry name" value="Intergrase catalytic core"/>
    <property type="match status" value="1"/>
</dbReference>
<dbReference type="HAMAP" id="MF_02055">
    <property type="entry name" value="Recomb_XerA"/>
    <property type="match status" value="1"/>
</dbReference>
<dbReference type="InterPro" id="IPR044068">
    <property type="entry name" value="CB"/>
</dbReference>
<dbReference type="InterPro" id="IPR011010">
    <property type="entry name" value="DNA_brk_join_enz"/>
</dbReference>
<dbReference type="InterPro" id="IPR013762">
    <property type="entry name" value="Integrase-like_cat_sf"/>
</dbReference>
<dbReference type="InterPro" id="IPR002104">
    <property type="entry name" value="Integrase_catalytic"/>
</dbReference>
<dbReference type="InterPro" id="IPR010998">
    <property type="entry name" value="Integrase_recombinase_N"/>
</dbReference>
<dbReference type="InterPro" id="IPR004107">
    <property type="entry name" value="Integrase_SAM-like_N"/>
</dbReference>
<dbReference type="InterPro" id="IPR050090">
    <property type="entry name" value="Tyrosine_recombinase_XerCD"/>
</dbReference>
<dbReference type="InterPro" id="IPR033686">
    <property type="entry name" value="XerA"/>
</dbReference>
<dbReference type="NCBIfam" id="NF040815">
    <property type="entry name" value="recomb_XerA_Arch"/>
    <property type="match status" value="1"/>
</dbReference>
<dbReference type="PANTHER" id="PTHR30349:SF41">
    <property type="entry name" value="INTEGRASE_RECOMBINASE PROTEIN MJ0367-RELATED"/>
    <property type="match status" value="1"/>
</dbReference>
<dbReference type="PANTHER" id="PTHR30349">
    <property type="entry name" value="PHAGE INTEGRASE-RELATED"/>
    <property type="match status" value="1"/>
</dbReference>
<dbReference type="Pfam" id="PF13495">
    <property type="entry name" value="Phage_int_SAM_4"/>
    <property type="match status" value="1"/>
</dbReference>
<dbReference type="Pfam" id="PF00589">
    <property type="entry name" value="Phage_integrase"/>
    <property type="match status" value="1"/>
</dbReference>
<dbReference type="SUPFAM" id="SSF56349">
    <property type="entry name" value="DNA breaking-rejoining enzymes"/>
    <property type="match status" value="1"/>
</dbReference>
<dbReference type="PROSITE" id="PS51900">
    <property type="entry name" value="CB"/>
    <property type="match status" value="1"/>
</dbReference>
<dbReference type="PROSITE" id="PS51898">
    <property type="entry name" value="TYR_RECOMBINASE"/>
    <property type="match status" value="1"/>
</dbReference>
<gene>
    <name evidence="2 6" type="primary">xerA</name>
    <name evidence="8" type="synonym">xerC/D</name>
    <name evidence="8" type="ordered locus">SSO0375</name>
</gene>